<name>HIR3_CANGA</name>
<organism>
    <name type="scientific">Candida glabrata (strain ATCC 2001 / BCRC 20586 / JCM 3761 / NBRC 0622 / NRRL Y-65 / CBS 138)</name>
    <name type="common">Yeast</name>
    <name type="synonym">Nakaseomyces glabratus</name>
    <dbReference type="NCBI Taxonomy" id="284593"/>
    <lineage>
        <taxon>Eukaryota</taxon>
        <taxon>Fungi</taxon>
        <taxon>Dikarya</taxon>
        <taxon>Ascomycota</taxon>
        <taxon>Saccharomycotina</taxon>
        <taxon>Saccharomycetes</taxon>
        <taxon>Saccharomycetales</taxon>
        <taxon>Saccharomycetaceae</taxon>
        <taxon>Nakaseomyces</taxon>
    </lineage>
</organism>
<keyword id="KW-0159">Chromosome partition</keyword>
<keyword id="KW-0539">Nucleus</keyword>
<keyword id="KW-1185">Reference proteome</keyword>
<keyword id="KW-0804">Transcription</keyword>
<keyword id="KW-0805">Transcription regulation</keyword>
<accession>Q6FK87</accession>
<sequence>MSSFSFLNQSPDIEQLEAEEHTRETQIELCFQLFQDALERLKDDKFGDANDLFEKLMSQEVIKPDKWGLYAYSSSIVDNLRYLAYRNRGFFYYKFLMNQYSESMSSEDVVDNILKIVENLLESLRHSEADYNVIEVLVQIFESFKSKRLQKLLLENEFMNNDSHLLFSGRKRTNILPQLKVLISQYINLLKDLHASSVLEKKIICNGQAKNTSHLPRTNVKFKNILEQLNKLRTEDDELIKSLDIHDIELDNYDWTSLLRSLRETLPTVKSLALFGRNSDPYAETETPIEAVKVIVKEEVVIDKIHDNSNNENEVTEEKEITDNKVVTTNGNNRKRSITEIETKHAQRSSKRFRDRDSSAADSETPMTFEPMFYSYTKILSLLGCKAPYDYEAIYPDLMEVKANDIIYADFLACLKEWSHWHTDCLSSQNEKEIKTKKVESSTDVSLSHFKTLLNSKNFQKSDDHIPEISQTSLRRFLDKVNRQQCHFHELRFKLIWFLFDNQNGDRLLTSTRWTKQMYRDVEWITLSIEKNIFSFIQSDIAKYRHVALSIFETLINSLVELCEEINSKLSLGQKANDQKTQKVKIEKKITKWNSIIAQVETTDRDWTVRYLWAYYTLIQCTSDIQNCLLSNILEKVHQILMKDNSSTVYLYPNADFISSFDLSFVDTQLKKLKMIKKLVNVDKHSESDKSEDNNSQFIMLENVLLSTISENHAVGGDDDDMIDFFMSAPFMLKFKLWELIYMKYVKKNDIEKTTLIYGIMLKLLVDTLECKTYRTLGPKKRQERLLIMMSCLKDITHNCIEVLKNNAWLQKKLSWYDDTTSQLVFIFFILFPMLPVNTPNKLSGTQTFFQKATKSSKTIKSIFVDILTLLLFHLNIGLKSKISSEPELENSIIDLVSTTHISISFYNFCDYASGNFLQIAENLICQFTNEEAFTQLKQIMWCKYHYQLSGDSSIVSQHKTKAMEMSKMVSLPLGIYLVKLQYQDKHPYINSAKIASKQILDNIVETFGDLSSQDNYIIMRNLHAFNGYLRSNITSKLFQSCFEGKDKVDLKNPNDEFQKAMDAGVFYVSGIQALNLYKIRKRSVQARPSELDAIITMFKNDILYNTKRFESWYLLGKCYSYIVEDDLLWTADKISSSEKKAVIATTQKRAILCYAMSLTLFFENETTRTVDEQIVIVECLESLANELMIAVYKPMEALCFDTNLSSLVVSSSNPATSSEIEKSSVAPIYSITDSSIEDTMIKCLTLANRYQESLLEAGKLDRLNWFNFYSIAIVYSTEKLDRKGDMIDNMSKACELANKYTSVKDSVVEPHVALIHMLYKLYIEGKVTMEDTLSTLKRDKFFEGFDDDFWILDVSLTQDYQKREFFSKLIELLKYVISKDKKKWQHEPYFYIAEILFMEMKDVEKSREWMDNIISIRSVNKNLVNIWKPDYERPGKHFVFTHNYVMFYLELLKYDKDAQSIGLLTKKLRRFSSGMAYIGKANDVATSYFIECVTKKYLLHDKVYTESYMGNINYNDFVKYSQEIVDNSKAADIAEDILEVLKIAYQLKKGTNSVVYDTVCLSLFFQYIYEPYRKEHPETEPQLVSDSENKSNIRKKVSKKDAFDKIRALVDKLP</sequence>
<gene>
    <name type="primary">HIR3</name>
    <name type="ordered locus">CAGL0M00286g</name>
</gene>
<feature type="chain" id="PRO_0000256197" description="Histone transcription regulator 3 homolog">
    <location>
        <begin position="1"/>
        <end position="1615"/>
    </location>
</feature>
<feature type="region of interest" description="Disordered" evidence="2">
    <location>
        <begin position="339"/>
        <end position="364"/>
    </location>
</feature>
<proteinExistence type="inferred from homology"/>
<protein>
    <recommendedName>
        <fullName>Histone transcription regulator 3 homolog</fullName>
    </recommendedName>
</protein>
<reference key="1">
    <citation type="journal article" date="2004" name="Nature">
        <title>Genome evolution in yeasts.</title>
        <authorList>
            <person name="Dujon B."/>
            <person name="Sherman D."/>
            <person name="Fischer G."/>
            <person name="Durrens P."/>
            <person name="Casaregola S."/>
            <person name="Lafontaine I."/>
            <person name="de Montigny J."/>
            <person name="Marck C."/>
            <person name="Neuveglise C."/>
            <person name="Talla E."/>
            <person name="Goffard N."/>
            <person name="Frangeul L."/>
            <person name="Aigle M."/>
            <person name="Anthouard V."/>
            <person name="Babour A."/>
            <person name="Barbe V."/>
            <person name="Barnay S."/>
            <person name="Blanchin S."/>
            <person name="Beckerich J.-M."/>
            <person name="Beyne E."/>
            <person name="Bleykasten C."/>
            <person name="Boisrame A."/>
            <person name="Boyer J."/>
            <person name="Cattolico L."/>
            <person name="Confanioleri F."/>
            <person name="de Daruvar A."/>
            <person name="Despons L."/>
            <person name="Fabre E."/>
            <person name="Fairhead C."/>
            <person name="Ferry-Dumazet H."/>
            <person name="Groppi A."/>
            <person name="Hantraye F."/>
            <person name="Hennequin C."/>
            <person name="Jauniaux N."/>
            <person name="Joyet P."/>
            <person name="Kachouri R."/>
            <person name="Kerrest A."/>
            <person name="Koszul R."/>
            <person name="Lemaire M."/>
            <person name="Lesur I."/>
            <person name="Ma L."/>
            <person name="Muller H."/>
            <person name="Nicaud J.-M."/>
            <person name="Nikolski M."/>
            <person name="Oztas S."/>
            <person name="Ozier-Kalogeropoulos O."/>
            <person name="Pellenz S."/>
            <person name="Potier S."/>
            <person name="Richard G.-F."/>
            <person name="Straub M.-L."/>
            <person name="Suleau A."/>
            <person name="Swennen D."/>
            <person name="Tekaia F."/>
            <person name="Wesolowski-Louvel M."/>
            <person name="Westhof E."/>
            <person name="Wirth B."/>
            <person name="Zeniou-Meyer M."/>
            <person name="Zivanovic Y."/>
            <person name="Bolotin-Fukuhara M."/>
            <person name="Thierry A."/>
            <person name="Bouchier C."/>
            <person name="Caudron B."/>
            <person name="Scarpelli C."/>
            <person name="Gaillardin C."/>
            <person name="Weissenbach J."/>
            <person name="Wincker P."/>
            <person name="Souciet J.-L."/>
        </authorList>
    </citation>
    <scope>NUCLEOTIDE SEQUENCE [LARGE SCALE GENOMIC DNA]</scope>
    <source>
        <strain>ATCC 2001 / BCRC 20586 / JCM 3761 / NBRC 0622 / NRRL Y-65 / CBS 138</strain>
    </source>
</reference>
<dbReference type="EMBL" id="CR380959">
    <property type="protein sequence ID" value="CAG62333.1"/>
    <property type="molecule type" value="Genomic_DNA"/>
</dbReference>
<dbReference type="RefSeq" id="XP_449357.1">
    <property type="nucleotide sequence ID" value="XM_449357.1"/>
</dbReference>
<dbReference type="SMR" id="Q6FK87"/>
<dbReference type="FunCoup" id="Q6FK87">
    <property type="interactions" value="189"/>
</dbReference>
<dbReference type="STRING" id="284593.Q6FK87"/>
<dbReference type="EnsemblFungi" id="CAGL0M00286g-T">
    <property type="protein sequence ID" value="CAGL0M00286g-T-p1"/>
    <property type="gene ID" value="CAGL0M00286g"/>
</dbReference>
<dbReference type="GeneID" id="2891145"/>
<dbReference type="KEGG" id="cgr:2891145"/>
<dbReference type="CGD" id="CAL0136481">
    <property type="gene designation" value="HIR3"/>
</dbReference>
<dbReference type="VEuPathDB" id="FungiDB:CAGL0M00286g"/>
<dbReference type="eggNOG" id="ENOG502QQX4">
    <property type="taxonomic scope" value="Eukaryota"/>
</dbReference>
<dbReference type="HOGENOM" id="CLU_001316_0_0_1"/>
<dbReference type="InParanoid" id="Q6FK87"/>
<dbReference type="OMA" id="WETWYRL"/>
<dbReference type="Proteomes" id="UP000002428">
    <property type="component" value="Chromosome M"/>
</dbReference>
<dbReference type="GO" id="GO:0000417">
    <property type="term" value="C:HIR complex"/>
    <property type="evidence" value="ECO:0007669"/>
    <property type="project" value="EnsemblFungi"/>
</dbReference>
<dbReference type="GO" id="GO:0005634">
    <property type="term" value="C:nucleus"/>
    <property type="evidence" value="ECO:0007669"/>
    <property type="project" value="UniProtKB-SubCell"/>
</dbReference>
<dbReference type="GO" id="GO:0003677">
    <property type="term" value="F:DNA binding"/>
    <property type="evidence" value="ECO:0007669"/>
    <property type="project" value="EnsemblFungi"/>
</dbReference>
<dbReference type="GO" id="GO:0031491">
    <property type="term" value="F:nucleosome binding"/>
    <property type="evidence" value="ECO:0007669"/>
    <property type="project" value="EnsemblFungi"/>
</dbReference>
<dbReference type="GO" id="GO:0003714">
    <property type="term" value="F:transcription corepressor activity"/>
    <property type="evidence" value="ECO:0007669"/>
    <property type="project" value="EnsemblFungi"/>
</dbReference>
<dbReference type="GO" id="GO:0007059">
    <property type="term" value="P:chromosome segregation"/>
    <property type="evidence" value="ECO:0007669"/>
    <property type="project" value="UniProtKB-KW"/>
</dbReference>
<dbReference type="GO" id="GO:0000082">
    <property type="term" value="P:G1/S transition of mitotic cell cycle"/>
    <property type="evidence" value="ECO:0007669"/>
    <property type="project" value="EnsemblFungi"/>
</dbReference>
<dbReference type="GO" id="GO:1905268">
    <property type="term" value="P:negative regulation of chromatin organization"/>
    <property type="evidence" value="ECO:0007669"/>
    <property type="project" value="EnsemblFungi"/>
</dbReference>
<dbReference type="GO" id="GO:0000122">
    <property type="term" value="P:negative regulation of transcription by RNA polymerase II"/>
    <property type="evidence" value="ECO:0007669"/>
    <property type="project" value="EnsemblFungi"/>
</dbReference>
<dbReference type="GO" id="GO:0006334">
    <property type="term" value="P:nucleosome assembly"/>
    <property type="evidence" value="ECO:0007669"/>
    <property type="project" value="EnsemblFungi"/>
</dbReference>
<dbReference type="GO" id="GO:0006368">
    <property type="term" value="P:transcription elongation by RNA polymerase II"/>
    <property type="evidence" value="ECO:0007669"/>
    <property type="project" value="EnsemblFungi"/>
</dbReference>
<dbReference type="InterPro" id="IPR033053">
    <property type="entry name" value="Hir3/CABIN1"/>
</dbReference>
<dbReference type="PANTHER" id="PTHR15502">
    <property type="entry name" value="CALCINEURIN-BINDING PROTEIN CABIN 1-RELATED"/>
    <property type="match status" value="1"/>
</dbReference>
<dbReference type="PANTHER" id="PTHR15502:SF7">
    <property type="entry name" value="CALCINEURIN-BINDING PROTEIN CABIN-1"/>
    <property type="match status" value="1"/>
</dbReference>
<comment type="function">
    <text evidence="1">Has a role in a nucleosome assembly pathway that is required for the integrity of heterochromatin and proper chromosome segregation.</text>
</comment>
<comment type="subcellular location">
    <subcellularLocation>
        <location evidence="1">Nucleus</location>
    </subcellularLocation>
</comment>
<comment type="similarity">
    <text evidence="3">Belongs to the HIR3 family.</text>
</comment>
<evidence type="ECO:0000250" key="1"/>
<evidence type="ECO:0000256" key="2">
    <source>
        <dbReference type="SAM" id="MobiDB-lite"/>
    </source>
</evidence>
<evidence type="ECO:0000305" key="3"/>